<sequence>MTSKSSPLIFERSREGRYAYSLPKSDIKTNSVESLLDDKFIRKNKAEFPEVAELDLVRHYTELSNKNFGVDNGFYPLGSCTMKYNPKINEKVARIPGFSESHPLQDEDQVQGSLEIIYSLQEELKEITGMDEVTLQPAAGAHGEWTALMIFKAYHENNGEGHRDEVIVPDSAHGTNPASASFAGFKSVTVKSNERGEVNIDDLKRVVNENTAAIMLTNPNTLGIFEKNIMEIREIVHNAGGLLYYDGANLNAIMDKVRPGDMGFDAVHLNLHKTFTGPHGGGGPGSGPVGVVKELASYLPKPMVIKDGDKFKYDNDIKNSIGRVKPFYGNFGIYLRAYTYIRTMGATGLKEVSEAAVLNANYIKARLSKHFEIPYKQYCKHEFVLSGVRQKEFGVRTLDMAKRLLDFGVHPPTIYFPLNVEEGMMIEPTETESKETLDYFIDTLISIAEEAKNDPDKVLEAPHTTVIDRLDEATAARKPILKFENLKQEK</sequence>
<reference key="1">
    <citation type="journal article" date="2008" name="J. Bacteriol.">
        <title>Genome sequence of Staphylococcus aureus strain Newman and comparative analysis of staphylococcal genomes: polymorphism and evolution of two major pathogenicity islands.</title>
        <authorList>
            <person name="Baba T."/>
            <person name="Bae T."/>
            <person name="Schneewind O."/>
            <person name="Takeuchi F."/>
            <person name="Hiramatsu K."/>
        </authorList>
    </citation>
    <scope>NUCLEOTIDE SEQUENCE [LARGE SCALE GENOMIC DNA]</scope>
    <source>
        <strain>Newman</strain>
    </source>
</reference>
<name>GCSPB_STAAE</name>
<proteinExistence type="inferred from homology"/>
<feature type="chain" id="PRO_1000072773" description="Probable glycine dehydrogenase (decarboxylating) subunit 2">
    <location>
        <begin position="1"/>
        <end position="490"/>
    </location>
</feature>
<feature type="modified residue" description="N6-(pyridoxal phosphate)lysine" evidence="1">
    <location>
        <position position="273"/>
    </location>
</feature>
<accession>A6QH79</accession>
<organism>
    <name type="scientific">Staphylococcus aureus (strain Newman)</name>
    <dbReference type="NCBI Taxonomy" id="426430"/>
    <lineage>
        <taxon>Bacteria</taxon>
        <taxon>Bacillati</taxon>
        <taxon>Bacillota</taxon>
        <taxon>Bacilli</taxon>
        <taxon>Bacillales</taxon>
        <taxon>Staphylococcaceae</taxon>
        <taxon>Staphylococcus</taxon>
    </lineage>
</organism>
<gene>
    <name evidence="1" type="primary">gcvPB</name>
    <name type="ordered locus">NWMN_1439</name>
</gene>
<evidence type="ECO:0000255" key="1">
    <source>
        <dbReference type="HAMAP-Rule" id="MF_00713"/>
    </source>
</evidence>
<protein>
    <recommendedName>
        <fullName evidence="1">Probable glycine dehydrogenase (decarboxylating) subunit 2</fullName>
        <ecNumber evidence="1">1.4.4.2</ecNumber>
    </recommendedName>
    <alternativeName>
        <fullName evidence="1">Glycine cleavage system P-protein subunit 2</fullName>
    </alternativeName>
    <alternativeName>
        <fullName evidence="1">Glycine decarboxylase subunit 2</fullName>
    </alternativeName>
    <alternativeName>
        <fullName evidence="1">Glycine dehydrogenase (aminomethyl-transferring) subunit 2</fullName>
    </alternativeName>
</protein>
<dbReference type="EC" id="1.4.4.2" evidence="1"/>
<dbReference type="EMBL" id="AP009351">
    <property type="protein sequence ID" value="BAF67711.1"/>
    <property type="molecule type" value="Genomic_DNA"/>
</dbReference>
<dbReference type="RefSeq" id="WP_000202192.1">
    <property type="nucleotide sequence ID" value="NZ_JBBIAE010000001.1"/>
</dbReference>
<dbReference type="SMR" id="A6QH79"/>
<dbReference type="KEGG" id="sae:NWMN_1439"/>
<dbReference type="HOGENOM" id="CLU_004620_5_0_9"/>
<dbReference type="Proteomes" id="UP000006386">
    <property type="component" value="Chromosome"/>
</dbReference>
<dbReference type="GO" id="GO:0005829">
    <property type="term" value="C:cytosol"/>
    <property type="evidence" value="ECO:0007669"/>
    <property type="project" value="TreeGrafter"/>
</dbReference>
<dbReference type="GO" id="GO:0005960">
    <property type="term" value="C:glycine cleavage complex"/>
    <property type="evidence" value="ECO:0007669"/>
    <property type="project" value="TreeGrafter"/>
</dbReference>
<dbReference type="GO" id="GO:0016594">
    <property type="term" value="F:glycine binding"/>
    <property type="evidence" value="ECO:0007669"/>
    <property type="project" value="TreeGrafter"/>
</dbReference>
<dbReference type="GO" id="GO:0004375">
    <property type="term" value="F:glycine dehydrogenase (decarboxylating) activity"/>
    <property type="evidence" value="ECO:0007669"/>
    <property type="project" value="UniProtKB-EC"/>
</dbReference>
<dbReference type="GO" id="GO:0030170">
    <property type="term" value="F:pyridoxal phosphate binding"/>
    <property type="evidence" value="ECO:0007669"/>
    <property type="project" value="TreeGrafter"/>
</dbReference>
<dbReference type="GO" id="GO:0019464">
    <property type="term" value="P:glycine decarboxylation via glycine cleavage system"/>
    <property type="evidence" value="ECO:0007669"/>
    <property type="project" value="UniProtKB-UniRule"/>
</dbReference>
<dbReference type="CDD" id="cd00613">
    <property type="entry name" value="GDC-P"/>
    <property type="match status" value="1"/>
</dbReference>
<dbReference type="FunFam" id="3.40.640.10:FF:000034">
    <property type="entry name" value="Probable glycine dehydrogenase (decarboxylating) subunit 2"/>
    <property type="match status" value="1"/>
</dbReference>
<dbReference type="FunFam" id="3.90.1150.10:FF:000014">
    <property type="entry name" value="Probable glycine dehydrogenase (decarboxylating) subunit 2"/>
    <property type="match status" value="1"/>
</dbReference>
<dbReference type="Gene3D" id="6.20.440.10">
    <property type="match status" value="1"/>
</dbReference>
<dbReference type="Gene3D" id="3.90.1150.10">
    <property type="entry name" value="Aspartate Aminotransferase, domain 1"/>
    <property type="match status" value="1"/>
</dbReference>
<dbReference type="Gene3D" id="3.40.640.10">
    <property type="entry name" value="Type I PLP-dependent aspartate aminotransferase-like (Major domain)"/>
    <property type="match status" value="1"/>
</dbReference>
<dbReference type="HAMAP" id="MF_00713">
    <property type="entry name" value="GcvPB"/>
    <property type="match status" value="1"/>
</dbReference>
<dbReference type="InterPro" id="IPR000192">
    <property type="entry name" value="Aminotrans_V_dom"/>
</dbReference>
<dbReference type="InterPro" id="IPR023012">
    <property type="entry name" value="GcvPB"/>
</dbReference>
<dbReference type="InterPro" id="IPR049316">
    <property type="entry name" value="GDC-P_C"/>
</dbReference>
<dbReference type="InterPro" id="IPR020581">
    <property type="entry name" value="GDC_P"/>
</dbReference>
<dbReference type="InterPro" id="IPR015424">
    <property type="entry name" value="PyrdxlP-dep_Trfase"/>
</dbReference>
<dbReference type="InterPro" id="IPR015421">
    <property type="entry name" value="PyrdxlP-dep_Trfase_major"/>
</dbReference>
<dbReference type="InterPro" id="IPR015422">
    <property type="entry name" value="PyrdxlP-dep_Trfase_small"/>
</dbReference>
<dbReference type="NCBIfam" id="NF003346">
    <property type="entry name" value="PRK04366.1"/>
    <property type="match status" value="1"/>
</dbReference>
<dbReference type="PANTHER" id="PTHR11773:SF1">
    <property type="entry name" value="GLYCINE DEHYDROGENASE (DECARBOXYLATING), MITOCHONDRIAL"/>
    <property type="match status" value="1"/>
</dbReference>
<dbReference type="PANTHER" id="PTHR11773">
    <property type="entry name" value="GLYCINE DEHYDROGENASE, DECARBOXYLATING"/>
    <property type="match status" value="1"/>
</dbReference>
<dbReference type="Pfam" id="PF00266">
    <property type="entry name" value="Aminotran_5"/>
    <property type="match status" value="1"/>
</dbReference>
<dbReference type="Pfam" id="PF21478">
    <property type="entry name" value="GcvP2_C"/>
    <property type="match status" value="1"/>
</dbReference>
<dbReference type="SUPFAM" id="SSF53383">
    <property type="entry name" value="PLP-dependent transferases"/>
    <property type="match status" value="1"/>
</dbReference>
<comment type="function">
    <text evidence="1">The glycine cleavage system catalyzes the degradation of glycine. The P protein binds the alpha-amino group of glycine through its pyridoxal phosphate cofactor; CO(2) is released and the remaining methylamine moiety is then transferred to the lipoamide cofactor of the H protein.</text>
</comment>
<comment type="catalytic activity">
    <reaction evidence="1">
        <text>N(6)-[(R)-lipoyl]-L-lysyl-[glycine-cleavage complex H protein] + glycine + H(+) = N(6)-[(R)-S(8)-aminomethyldihydrolipoyl]-L-lysyl-[glycine-cleavage complex H protein] + CO2</text>
        <dbReference type="Rhea" id="RHEA:24304"/>
        <dbReference type="Rhea" id="RHEA-COMP:10494"/>
        <dbReference type="Rhea" id="RHEA-COMP:10495"/>
        <dbReference type="ChEBI" id="CHEBI:15378"/>
        <dbReference type="ChEBI" id="CHEBI:16526"/>
        <dbReference type="ChEBI" id="CHEBI:57305"/>
        <dbReference type="ChEBI" id="CHEBI:83099"/>
        <dbReference type="ChEBI" id="CHEBI:83143"/>
        <dbReference type="EC" id="1.4.4.2"/>
    </reaction>
</comment>
<comment type="cofactor">
    <cofactor evidence="1">
        <name>pyridoxal 5'-phosphate</name>
        <dbReference type="ChEBI" id="CHEBI:597326"/>
    </cofactor>
</comment>
<comment type="subunit">
    <text evidence="1">The glycine cleavage system is composed of four proteins: P, T, L and H. In this organism, the P 'protein' is a heterodimer of two subunits.</text>
</comment>
<comment type="similarity">
    <text evidence="1">Belongs to the GcvP family. C-terminal subunit subfamily.</text>
</comment>
<keyword id="KW-0560">Oxidoreductase</keyword>
<keyword id="KW-0663">Pyridoxal phosphate</keyword>